<keyword id="KW-0004">4Fe-4S</keyword>
<keyword id="KW-0963">Cytoplasm</keyword>
<keyword id="KW-0408">Iron</keyword>
<keyword id="KW-0411">Iron-sulfur</keyword>
<keyword id="KW-0479">Metal-binding</keyword>
<keyword id="KW-1185">Reference proteome</keyword>
<keyword id="KW-0949">S-adenosyl-L-methionine</keyword>
<keyword id="KW-0808">Transferase</keyword>
<proteinExistence type="inferred from homology"/>
<accession>Q5LUV8</accession>
<sequence>MRAMSTNPPNLRPDLAPAARLGTAATRPGQPTIGMVSLGCPKALVDSERILTRLRAEGYGISPDYAGADAVIVNTCGFLDSAKAESLDAIGEALKENGKVIVTGCLGAEPDYIREHHPRILAVTGPHQYEQVLDAVHGAVPPDPDPFVDLLPASGVQLTPRHYSYLKISEGCNHKCKFCIIPDMRGKLASRPAHAVLREAEKLVDNGVKELLIISQDTSAYGLDRKYDTNLWKNREVRSHITDLARELGQLDAWVRLHYVYPYPHVRELIPLMADAGCNLLPYLDIPFQHAHPDTLKRMARPAAAARTLDEIAAWREICPEITLRSTFIVGYPGETEAEFQTLLDWMDEAQLDRVGCFQYENVAGARSNDLPDHVPAEVKQERWDRFMAKAQAISEAKLAARVGQVIEVIVDEVDDEAATCRTKSDAPEIDGNLFIDEGFEGLQPGDIVTVEVDEAGEYDLWGRLR</sequence>
<feature type="chain" id="PRO_0000375014" description="Ribosomal protein uS12 methylthiotransferase RimO">
    <location>
        <begin position="1"/>
        <end position="466"/>
    </location>
</feature>
<feature type="domain" description="MTTase N-terminal" evidence="1">
    <location>
        <begin position="31"/>
        <end position="141"/>
    </location>
</feature>
<feature type="domain" description="Radical SAM core" evidence="2">
    <location>
        <begin position="158"/>
        <end position="397"/>
    </location>
</feature>
<feature type="domain" description="TRAM" evidence="1">
    <location>
        <begin position="400"/>
        <end position="466"/>
    </location>
</feature>
<feature type="binding site" evidence="1">
    <location>
        <position position="40"/>
    </location>
    <ligand>
        <name>[4Fe-4S] cluster</name>
        <dbReference type="ChEBI" id="CHEBI:49883"/>
        <label>1</label>
    </ligand>
</feature>
<feature type="binding site" evidence="1">
    <location>
        <position position="76"/>
    </location>
    <ligand>
        <name>[4Fe-4S] cluster</name>
        <dbReference type="ChEBI" id="CHEBI:49883"/>
        <label>1</label>
    </ligand>
</feature>
<feature type="binding site" evidence="1">
    <location>
        <position position="105"/>
    </location>
    <ligand>
        <name>[4Fe-4S] cluster</name>
        <dbReference type="ChEBI" id="CHEBI:49883"/>
        <label>1</label>
    </ligand>
</feature>
<feature type="binding site" evidence="1">
    <location>
        <position position="172"/>
    </location>
    <ligand>
        <name>[4Fe-4S] cluster</name>
        <dbReference type="ChEBI" id="CHEBI:49883"/>
        <label>2</label>
        <note>4Fe-4S-S-AdoMet</note>
    </ligand>
</feature>
<feature type="binding site" evidence="1">
    <location>
        <position position="176"/>
    </location>
    <ligand>
        <name>[4Fe-4S] cluster</name>
        <dbReference type="ChEBI" id="CHEBI:49883"/>
        <label>2</label>
        <note>4Fe-4S-S-AdoMet</note>
    </ligand>
</feature>
<feature type="binding site" evidence="1">
    <location>
        <position position="179"/>
    </location>
    <ligand>
        <name>[4Fe-4S] cluster</name>
        <dbReference type="ChEBI" id="CHEBI:49883"/>
        <label>2</label>
        <note>4Fe-4S-S-AdoMet</note>
    </ligand>
</feature>
<name>RIMO_RUEPO</name>
<evidence type="ECO:0000255" key="1">
    <source>
        <dbReference type="HAMAP-Rule" id="MF_01865"/>
    </source>
</evidence>
<evidence type="ECO:0000255" key="2">
    <source>
        <dbReference type="PROSITE-ProRule" id="PRU01266"/>
    </source>
</evidence>
<dbReference type="EC" id="2.8.4.4" evidence="1"/>
<dbReference type="EMBL" id="CP000031">
    <property type="protein sequence ID" value="AAV94249.1"/>
    <property type="molecule type" value="Genomic_DNA"/>
</dbReference>
<dbReference type="SMR" id="Q5LUV8"/>
<dbReference type="STRING" id="246200.SPO0944"/>
<dbReference type="PaxDb" id="246200-SPO0944"/>
<dbReference type="KEGG" id="sil:SPO0944"/>
<dbReference type="eggNOG" id="COG0621">
    <property type="taxonomic scope" value="Bacteria"/>
</dbReference>
<dbReference type="HOGENOM" id="CLU_018697_0_0_5"/>
<dbReference type="Proteomes" id="UP000001023">
    <property type="component" value="Chromosome"/>
</dbReference>
<dbReference type="GO" id="GO:0005829">
    <property type="term" value="C:cytosol"/>
    <property type="evidence" value="ECO:0007669"/>
    <property type="project" value="TreeGrafter"/>
</dbReference>
<dbReference type="GO" id="GO:0051539">
    <property type="term" value="F:4 iron, 4 sulfur cluster binding"/>
    <property type="evidence" value="ECO:0007669"/>
    <property type="project" value="UniProtKB-UniRule"/>
</dbReference>
<dbReference type="GO" id="GO:0035599">
    <property type="term" value="F:aspartic acid methylthiotransferase activity"/>
    <property type="evidence" value="ECO:0007669"/>
    <property type="project" value="TreeGrafter"/>
</dbReference>
<dbReference type="GO" id="GO:0046872">
    <property type="term" value="F:metal ion binding"/>
    <property type="evidence" value="ECO:0007669"/>
    <property type="project" value="UniProtKB-KW"/>
</dbReference>
<dbReference type="GO" id="GO:0103039">
    <property type="term" value="F:protein methylthiotransferase activity"/>
    <property type="evidence" value="ECO:0007669"/>
    <property type="project" value="UniProtKB-EC"/>
</dbReference>
<dbReference type="GO" id="GO:0006400">
    <property type="term" value="P:tRNA modification"/>
    <property type="evidence" value="ECO:0007669"/>
    <property type="project" value="InterPro"/>
</dbReference>
<dbReference type="CDD" id="cd01335">
    <property type="entry name" value="Radical_SAM"/>
    <property type="match status" value="1"/>
</dbReference>
<dbReference type="FunFam" id="3.40.50.12160:FF:000002">
    <property type="entry name" value="Ribosomal protein S12 methylthiotransferase RimO"/>
    <property type="match status" value="1"/>
</dbReference>
<dbReference type="FunFam" id="3.80.30.20:FF:000001">
    <property type="entry name" value="tRNA-2-methylthio-N(6)-dimethylallyladenosine synthase 2"/>
    <property type="match status" value="1"/>
</dbReference>
<dbReference type="Gene3D" id="3.40.50.12160">
    <property type="entry name" value="Methylthiotransferase, N-terminal domain"/>
    <property type="match status" value="1"/>
</dbReference>
<dbReference type="Gene3D" id="2.40.50.140">
    <property type="entry name" value="Nucleic acid-binding proteins"/>
    <property type="match status" value="1"/>
</dbReference>
<dbReference type="Gene3D" id="3.80.30.20">
    <property type="entry name" value="tm_1862 like domain"/>
    <property type="match status" value="1"/>
</dbReference>
<dbReference type="HAMAP" id="MF_01865">
    <property type="entry name" value="MTTase_RimO"/>
    <property type="match status" value="1"/>
</dbReference>
<dbReference type="InterPro" id="IPR006638">
    <property type="entry name" value="Elp3/MiaA/NifB-like_rSAM"/>
</dbReference>
<dbReference type="InterPro" id="IPR005839">
    <property type="entry name" value="Methylthiotransferase"/>
</dbReference>
<dbReference type="InterPro" id="IPR013848">
    <property type="entry name" value="Methylthiotransferase_N"/>
</dbReference>
<dbReference type="InterPro" id="IPR038135">
    <property type="entry name" value="Methylthiotransferase_N_sf"/>
</dbReference>
<dbReference type="InterPro" id="IPR012340">
    <property type="entry name" value="NA-bd_OB-fold"/>
</dbReference>
<dbReference type="InterPro" id="IPR005840">
    <property type="entry name" value="Ribosomal_uS12_MeSTrfase_RimO"/>
</dbReference>
<dbReference type="InterPro" id="IPR007197">
    <property type="entry name" value="rSAM"/>
</dbReference>
<dbReference type="InterPro" id="IPR023404">
    <property type="entry name" value="rSAM_horseshoe"/>
</dbReference>
<dbReference type="InterPro" id="IPR002792">
    <property type="entry name" value="TRAM_dom"/>
</dbReference>
<dbReference type="NCBIfam" id="TIGR01125">
    <property type="entry name" value="30S ribosomal protein S12 methylthiotransferase RimO"/>
    <property type="match status" value="1"/>
</dbReference>
<dbReference type="NCBIfam" id="TIGR00089">
    <property type="entry name" value="MiaB/RimO family radical SAM methylthiotransferase"/>
    <property type="match status" value="1"/>
</dbReference>
<dbReference type="PANTHER" id="PTHR43837">
    <property type="entry name" value="RIBOSOMAL PROTEIN S12 METHYLTHIOTRANSFERASE RIMO"/>
    <property type="match status" value="1"/>
</dbReference>
<dbReference type="PANTHER" id="PTHR43837:SF1">
    <property type="entry name" value="RIBOSOMAL PROTEIN US12 METHYLTHIOTRANSFERASE RIMO"/>
    <property type="match status" value="1"/>
</dbReference>
<dbReference type="Pfam" id="PF04055">
    <property type="entry name" value="Radical_SAM"/>
    <property type="match status" value="1"/>
</dbReference>
<dbReference type="Pfam" id="PF18693">
    <property type="entry name" value="TRAM_2"/>
    <property type="match status" value="1"/>
</dbReference>
<dbReference type="Pfam" id="PF00919">
    <property type="entry name" value="UPF0004"/>
    <property type="match status" value="1"/>
</dbReference>
<dbReference type="SFLD" id="SFLDG01082">
    <property type="entry name" value="B12-binding_domain_containing"/>
    <property type="match status" value="1"/>
</dbReference>
<dbReference type="SFLD" id="SFLDG01061">
    <property type="entry name" value="methylthiotransferase"/>
    <property type="match status" value="1"/>
</dbReference>
<dbReference type="SFLD" id="SFLDF00274">
    <property type="entry name" value="ribosomal_protein_S12_methylth"/>
    <property type="match status" value="1"/>
</dbReference>
<dbReference type="SMART" id="SM00729">
    <property type="entry name" value="Elp3"/>
    <property type="match status" value="1"/>
</dbReference>
<dbReference type="SUPFAM" id="SSF102114">
    <property type="entry name" value="Radical SAM enzymes"/>
    <property type="match status" value="1"/>
</dbReference>
<dbReference type="PROSITE" id="PS51449">
    <property type="entry name" value="MTTASE_N"/>
    <property type="match status" value="1"/>
</dbReference>
<dbReference type="PROSITE" id="PS51918">
    <property type="entry name" value="RADICAL_SAM"/>
    <property type="match status" value="1"/>
</dbReference>
<dbReference type="PROSITE" id="PS50926">
    <property type="entry name" value="TRAM"/>
    <property type="match status" value="1"/>
</dbReference>
<protein>
    <recommendedName>
        <fullName evidence="1">Ribosomal protein uS12 methylthiotransferase RimO</fullName>
        <shortName evidence="1">uS12 MTTase</shortName>
        <shortName evidence="1">uS12 methylthiotransferase</shortName>
        <ecNumber evidence="1">2.8.4.4</ecNumber>
    </recommendedName>
    <alternativeName>
        <fullName evidence="1">Ribosomal protein uS12 (aspartate-C(3))-methylthiotransferase</fullName>
    </alternativeName>
    <alternativeName>
        <fullName evidence="1">Ribosome maturation factor RimO</fullName>
    </alternativeName>
</protein>
<comment type="function">
    <text evidence="1">Catalyzes the methylthiolation of an aspartic acid residue of ribosomal protein uS12.</text>
</comment>
<comment type="catalytic activity">
    <reaction evidence="1">
        <text>L-aspartate(89)-[ribosomal protein uS12]-hydrogen + (sulfur carrier)-SH + AH2 + 2 S-adenosyl-L-methionine = 3-methylsulfanyl-L-aspartate(89)-[ribosomal protein uS12]-hydrogen + (sulfur carrier)-H + 5'-deoxyadenosine + L-methionine + A + S-adenosyl-L-homocysteine + 2 H(+)</text>
        <dbReference type="Rhea" id="RHEA:37087"/>
        <dbReference type="Rhea" id="RHEA-COMP:10460"/>
        <dbReference type="Rhea" id="RHEA-COMP:10461"/>
        <dbReference type="Rhea" id="RHEA-COMP:14737"/>
        <dbReference type="Rhea" id="RHEA-COMP:14739"/>
        <dbReference type="ChEBI" id="CHEBI:13193"/>
        <dbReference type="ChEBI" id="CHEBI:15378"/>
        <dbReference type="ChEBI" id="CHEBI:17319"/>
        <dbReference type="ChEBI" id="CHEBI:17499"/>
        <dbReference type="ChEBI" id="CHEBI:29917"/>
        <dbReference type="ChEBI" id="CHEBI:29961"/>
        <dbReference type="ChEBI" id="CHEBI:57844"/>
        <dbReference type="ChEBI" id="CHEBI:57856"/>
        <dbReference type="ChEBI" id="CHEBI:59789"/>
        <dbReference type="ChEBI" id="CHEBI:64428"/>
        <dbReference type="ChEBI" id="CHEBI:73599"/>
        <dbReference type="EC" id="2.8.4.4"/>
    </reaction>
</comment>
<comment type="cofactor">
    <cofactor evidence="1">
        <name>[4Fe-4S] cluster</name>
        <dbReference type="ChEBI" id="CHEBI:49883"/>
    </cofactor>
    <text evidence="1">Binds 2 [4Fe-4S] clusters. One cluster is coordinated with 3 cysteines and an exchangeable S-adenosyl-L-methionine.</text>
</comment>
<comment type="subcellular location">
    <subcellularLocation>
        <location evidence="1">Cytoplasm</location>
    </subcellularLocation>
</comment>
<comment type="similarity">
    <text evidence="1">Belongs to the methylthiotransferase family. RimO subfamily.</text>
</comment>
<organism>
    <name type="scientific">Ruegeria pomeroyi (strain ATCC 700808 / DSM 15171 / DSS-3)</name>
    <name type="common">Silicibacter pomeroyi</name>
    <dbReference type="NCBI Taxonomy" id="246200"/>
    <lineage>
        <taxon>Bacteria</taxon>
        <taxon>Pseudomonadati</taxon>
        <taxon>Pseudomonadota</taxon>
        <taxon>Alphaproteobacteria</taxon>
        <taxon>Rhodobacterales</taxon>
        <taxon>Roseobacteraceae</taxon>
        <taxon>Ruegeria</taxon>
    </lineage>
</organism>
<gene>
    <name evidence="1" type="primary">rimO</name>
    <name type="ordered locus">SPO0944</name>
</gene>
<reference key="1">
    <citation type="journal article" date="2004" name="Nature">
        <title>Genome sequence of Silicibacter pomeroyi reveals adaptations to the marine environment.</title>
        <authorList>
            <person name="Moran M.A."/>
            <person name="Buchan A."/>
            <person name="Gonzalez J.M."/>
            <person name="Heidelberg J.F."/>
            <person name="Whitman W.B."/>
            <person name="Kiene R.P."/>
            <person name="Henriksen J.R."/>
            <person name="King G.M."/>
            <person name="Belas R."/>
            <person name="Fuqua C."/>
            <person name="Brinkac L.M."/>
            <person name="Lewis M."/>
            <person name="Johri S."/>
            <person name="Weaver B."/>
            <person name="Pai G."/>
            <person name="Eisen J.A."/>
            <person name="Rahe E."/>
            <person name="Sheldon W.M."/>
            <person name="Ye W."/>
            <person name="Miller T.R."/>
            <person name="Carlton J."/>
            <person name="Rasko D.A."/>
            <person name="Paulsen I.T."/>
            <person name="Ren Q."/>
            <person name="Daugherty S.C."/>
            <person name="DeBoy R.T."/>
            <person name="Dodson R.J."/>
            <person name="Durkin A.S."/>
            <person name="Madupu R."/>
            <person name="Nelson W.C."/>
            <person name="Sullivan S.A."/>
            <person name="Rosovitz M.J."/>
            <person name="Haft D.H."/>
            <person name="Selengut J."/>
            <person name="Ward N."/>
        </authorList>
    </citation>
    <scope>NUCLEOTIDE SEQUENCE [LARGE SCALE GENOMIC DNA]</scope>
    <source>
        <strain>ATCC 700808 / DSM 15171 / DSS-3</strain>
    </source>
</reference>
<reference key="2">
    <citation type="journal article" date="2014" name="Stand. Genomic Sci.">
        <title>An updated genome annotation for the model marine bacterium Ruegeria pomeroyi DSS-3.</title>
        <authorList>
            <person name="Rivers A.R."/>
            <person name="Smith C.B."/>
            <person name="Moran M.A."/>
        </authorList>
    </citation>
    <scope>GENOME REANNOTATION</scope>
    <source>
        <strain>ATCC 700808 / DSM 15171 / DSS-3</strain>
    </source>
</reference>